<dbReference type="EMBL" id="CP000020">
    <property type="protein sequence ID" value="AAW84705.1"/>
    <property type="molecule type" value="Genomic_DNA"/>
</dbReference>
<dbReference type="RefSeq" id="WP_005417172.1">
    <property type="nucleotide sequence ID" value="NZ_CAWLES010000001.1"/>
</dbReference>
<dbReference type="RefSeq" id="YP_203593.1">
    <property type="nucleotide sequence ID" value="NC_006840.2"/>
</dbReference>
<dbReference type="SMR" id="Q5E8E1"/>
<dbReference type="STRING" id="312309.VF_0210"/>
<dbReference type="EnsemblBacteria" id="AAW84705">
    <property type="protein sequence ID" value="AAW84705"/>
    <property type="gene ID" value="VF_0210"/>
</dbReference>
<dbReference type="GeneID" id="54162834"/>
<dbReference type="KEGG" id="vfi:VF_0210"/>
<dbReference type="PATRIC" id="fig|312309.11.peg.208"/>
<dbReference type="eggNOG" id="COG3074">
    <property type="taxonomic scope" value="Bacteria"/>
</dbReference>
<dbReference type="HOGENOM" id="CLU_171174_2_0_6"/>
<dbReference type="OrthoDB" id="6554593at2"/>
<dbReference type="PRO" id="PR:Q5E8E1"/>
<dbReference type="Proteomes" id="UP000000537">
    <property type="component" value="Chromosome I"/>
</dbReference>
<dbReference type="GO" id="GO:0005737">
    <property type="term" value="C:cytoplasm"/>
    <property type="evidence" value="ECO:0007669"/>
    <property type="project" value="UniProtKB-SubCell"/>
</dbReference>
<dbReference type="GO" id="GO:0000917">
    <property type="term" value="P:division septum assembly"/>
    <property type="evidence" value="ECO:0007669"/>
    <property type="project" value="UniProtKB-KW"/>
</dbReference>
<dbReference type="GO" id="GO:0043093">
    <property type="term" value="P:FtsZ-dependent cytokinesis"/>
    <property type="evidence" value="ECO:0007669"/>
    <property type="project" value="UniProtKB-UniRule"/>
</dbReference>
<dbReference type="Gene3D" id="1.20.5.340">
    <property type="match status" value="1"/>
</dbReference>
<dbReference type="HAMAP" id="MF_01196">
    <property type="entry name" value="ZapB"/>
    <property type="match status" value="1"/>
</dbReference>
<dbReference type="InterPro" id="IPR009252">
    <property type="entry name" value="Cell_div_ZapB"/>
</dbReference>
<dbReference type="Pfam" id="PF06005">
    <property type="entry name" value="ZapB"/>
    <property type="match status" value="1"/>
</dbReference>
<organism>
    <name type="scientific">Aliivibrio fischeri (strain ATCC 700601 / ES114)</name>
    <name type="common">Vibrio fischeri</name>
    <dbReference type="NCBI Taxonomy" id="312309"/>
    <lineage>
        <taxon>Bacteria</taxon>
        <taxon>Pseudomonadati</taxon>
        <taxon>Pseudomonadota</taxon>
        <taxon>Gammaproteobacteria</taxon>
        <taxon>Vibrionales</taxon>
        <taxon>Vibrionaceae</taxon>
        <taxon>Aliivibrio</taxon>
    </lineage>
</organism>
<comment type="function">
    <text evidence="1">Non-essential, abundant cell division factor that is required for proper Z-ring formation. It is recruited early to the divisome by direct interaction with FtsZ, stimulating Z-ring assembly and thereby promoting cell division earlier in the cell cycle. Its recruitment to the Z-ring requires functional FtsA or ZipA.</text>
</comment>
<comment type="subunit">
    <text evidence="1">Homodimer. The ends of the coiled-coil dimer bind to each other, forming polymers. Interacts with FtsZ.</text>
</comment>
<comment type="subcellular location">
    <subcellularLocation>
        <location>Cytoplasm</location>
    </subcellularLocation>
    <text evidence="1">Localizes to the septum at mid-cell, in a FtsZ-like pattern.</text>
</comment>
<comment type="similarity">
    <text evidence="1">Belongs to the ZapB family.</text>
</comment>
<evidence type="ECO:0000255" key="1">
    <source>
        <dbReference type="HAMAP-Rule" id="MF_01196"/>
    </source>
</evidence>
<evidence type="ECO:0000256" key="2">
    <source>
        <dbReference type="SAM" id="MobiDB-lite"/>
    </source>
</evidence>
<reference key="1">
    <citation type="journal article" date="2005" name="Proc. Natl. Acad. Sci. U.S.A.">
        <title>Complete genome sequence of Vibrio fischeri: a symbiotic bacterium with pathogenic congeners.</title>
        <authorList>
            <person name="Ruby E.G."/>
            <person name="Urbanowski M."/>
            <person name="Campbell J."/>
            <person name="Dunn A."/>
            <person name="Faini M."/>
            <person name="Gunsalus R."/>
            <person name="Lostroh P."/>
            <person name="Lupp C."/>
            <person name="McCann J."/>
            <person name="Millikan D."/>
            <person name="Schaefer A."/>
            <person name="Stabb E."/>
            <person name="Stevens A."/>
            <person name="Visick K."/>
            <person name="Whistler C."/>
            <person name="Greenberg E.P."/>
        </authorList>
    </citation>
    <scope>NUCLEOTIDE SEQUENCE [LARGE SCALE GENOMIC DNA]</scope>
    <source>
        <strain>ATCC 700601 / ES114</strain>
    </source>
</reference>
<sequence length="80" mass="9074">MSLEILEQLEAKVQMAVDTIALLQMEVEELKETNAALTQDLEQANNGRSEVEQEAQRARDEQAQFEARIRGLLGKMDEVE</sequence>
<gene>
    <name evidence="1" type="primary">zapB</name>
    <name type="ordered locus">VF_0210</name>
</gene>
<proteinExistence type="inferred from homology"/>
<protein>
    <recommendedName>
        <fullName evidence="1">Cell division protein ZapB</fullName>
    </recommendedName>
</protein>
<keyword id="KW-0131">Cell cycle</keyword>
<keyword id="KW-0132">Cell division</keyword>
<keyword id="KW-0175">Coiled coil</keyword>
<keyword id="KW-0963">Cytoplasm</keyword>
<keyword id="KW-1185">Reference proteome</keyword>
<keyword id="KW-0717">Septation</keyword>
<name>ZAPB_ALIF1</name>
<accession>Q5E8E1</accession>
<feature type="chain" id="PRO_0000333940" description="Cell division protein ZapB">
    <location>
        <begin position="1"/>
        <end position="80"/>
    </location>
</feature>
<feature type="region of interest" description="Disordered" evidence="2">
    <location>
        <begin position="41"/>
        <end position="60"/>
    </location>
</feature>
<feature type="coiled-coil region" evidence="1">
    <location>
        <begin position="3"/>
        <end position="80"/>
    </location>
</feature>
<feature type="compositionally biased region" description="Basic and acidic residues" evidence="2">
    <location>
        <begin position="49"/>
        <end position="60"/>
    </location>
</feature>